<name>PSBK_SACHY</name>
<evidence type="ECO:0000255" key="1">
    <source>
        <dbReference type="HAMAP-Rule" id="MF_00441"/>
    </source>
</evidence>
<sequence>MPNILSLTCICFNSVLCPTSFFFAKLPEAYAIFNPIVDVMPVIPVLFFLLAFVWQAAVSFR</sequence>
<protein>
    <recommendedName>
        <fullName evidence="1">Photosystem II reaction center protein K</fullName>
        <shortName evidence="1">PSII-K</shortName>
    </recommendedName>
</protein>
<geneLocation type="chloroplast"/>
<accession>Q6L3B3</accession>
<organism>
    <name type="scientific">Saccharum hybrid</name>
    <name type="common">Sugarcane</name>
    <dbReference type="NCBI Taxonomy" id="15819"/>
    <lineage>
        <taxon>Eukaryota</taxon>
        <taxon>Viridiplantae</taxon>
        <taxon>Streptophyta</taxon>
        <taxon>Embryophyta</taxon>
        <taxon>Tracheophyta</taxon>
        <taxon>Spermatophyta</taxon>
        <taxon>Magnoliopsida</taxon>
        <taxon>Liliopsida</taxon>
        <taxon>Poales</taxon>
        <taxon>Poaceae</taxon>
        <taxon>PACMAD clade</taxon>
        <taxon>Panicoideae</taxon>
        <taxon>Andropogonodae</taxon>
        <taxon>Andropogoneae</taxon>
        <taxon>Saccharinae</taxon>
        <taxon>Saccharum</taxon>
    </lineage>
</organism>
<dbReference type="EMBL" id="AE009947">
    <property type="protein sequence ID" value="AAT44679.1"/>
    <property type="molecule type" value="Genomic_DNA"/>
</dbReference>
<dbReference type="SMR" id="Q6L3B3"/>
<dbReference type="GO" id="GO:0009535">
    <property type="term" value="C:chloroplast thylakoid membrane"/>
    <property type="evidence" value="ECO:0007669"/>
    <property type="project" value="UniProtKB-SubCell"/>
</dbReference>
<dbReference type="GO" id="GO:0009539">
    <property type="term" value="C:photosystem II reaction center"/>
    <property type="evidence" value="ECO:0007669"/>
    <property type="project" value="InterPro"/>
</dbReference>
<dbReference type="GO" id="GO:0015979">
    <property type="term" value="P:photosynthesis"/>
    <property type="evidence" value="ECO:0007669"/>
    <property type="project" value="UniProtKB-UniRule"/>
</dbReference>
<dbReference type="HAMAP" id="MF_00441">
    <property type="entry name" value="PSII_PsbK"/>
    <property type="match status" value="1"/>
</dbReference>
<dbReference type="InterPro" id="IPR003687">
    <property type="entry name" value="PSII_PsbK"/>
</dbReference>
<dbReference type="InterPro" id="IPR037270">
    <property type="entry name" value="PSII_PsbK_sf"/>
</dbReference>
<dbReference type="NCBIfam" id="NF002715">
    <property type="entry name" value="PRK02553.1"/>
    <property type="match status" value="1"/>
</dbReference>
<dbReference type="PANTHER" id="PTHR35325">
    <property type="match status" value="1"/>
</dbReference>
<dbReference type="PANTHER" id="PTHR35325:SF1">
    <property type="entry name" value="PHOTOSYSTEM II REACTION CENTER PROTEIN K"/>
    <property type="match status" value="1"/>
</dbReference>
<dbReference type="Pfam" id="PF02533">
    <property type="entry name" value="PsbK"/>
    <property type="match status" value="1"/>
</dbReference>
<dbReference type="SUPFAM" id="SSF161037">
    <property type="entry name" value="Photosystem II reaction center protein K, PsbK"/>
    <property type="match status" value="1"/>
</dbReference>
<proteinExistence type="inferred from homology"/>
<feature type="propeptide" id="PRO_0000042057" evidence="1">
    <location>
        <begin position="1"/>
        <end position="24"/>
    </location>
</feature>
<feature type="chain" id="PRO_0000042058" description="Photosystem II reaction center protein K" evidence="1">
    <location>
        <begin position="25"/>
        <end position="61"/>
    </location>
</feature>
<feature type="transmembrane region" description="Helical" evidence="1">
    <location>
        <begin position="32"/>
        <end position="52"/>
    </location>
</feature>
<reference key="1">
    <citation type="journal article" date="2004" name="Curr. Genet.">
        <title>Structural features and transcript-editing analysis of sugarcane (Saccharum officinarum L.) chloroplast genome.</title>
        <authorList>
            <person name="Calsa T. Jr."/>
            <person name="Carraro D.M."/>
            <person name="Benatti M.R."/>
            <person name="Barbosa A.C."/>
            <person name="Kitajima J.P."/>
            <person name="Carrer H."/>
        </authorList>
    </citation>
    <scope>NUCLEOTIDE SEQUENCE [LARGE SCALE GENOMIC DNA]</scope>
    <source>
        <strain>cv. SP-80-3280</strain>
    </source>
</reference>
<comment type="function">
    <text evidence="1">One of the components of the core complex of photosystem II (PSII). PSII is a light-driven water:plastoquinone oxidoreductase that uses light energy to abstract electrons from H(2)O, generating O(2) and a proton gradient subsequently used for ATP formation. It consists of a core antenna complex that captures photons, and an electron transfer chain that converts photonic excitation into a charge separation.</text>
</comment>
<comment type="subunit">
    <text evidence="1">PSII is composed of 1 copy each of membrane proteins PsbA, PsbB, PsbC, PsbD, PsbE, PsbF, PsbH, PsbI, PsbJ, PsbK, PsbL, PsbM, PsbT, PsbX, PsbY, PsbZ, Psb30/Ycf12, at least 3 peripheral proteins of the oxygen-evolving complex and a large number of cofactors. It forms dimeric complexes.</text>
</comment>
<comment type="subcellular location">
    <subcellularLocation>
        <location evidence="1">Plastid</location>
        <location evidence="1">Chloroplast thylakoid membrane</location>
        <topology evidence="1">Single-pass membrane protein</topology>
    </subcellularLocation>
</comment>
<comment type="similarity">
    <text evidence="1">Belongs to the PsbK family.</text>
</comment>
<gene>
    <name evidence="1" type="primary">psbK</name>
    <name type="ordered locus">PS087</name>
</gene>
<keyword id="KW-0150">Chloroplast</keyword>
<keyword id="KW-0472">Membrane</keyword>
<keyword id="KW-0602">Photosynthesis</keyword>
<keyword id="KW-0604">Photosystem II</keyword>
<keyword id="KW-0934">Plastid</keyword>
<keyword id="KW-0674">Reaction center</keyword>
<keyword id="KW-0793">Thylakoid</keyword>
<keyword id="KW-0812">Transmembrane</keyword>
<keyword id="KW-1133">Transmembrane helix</keyword>